<name>FIBB_FELCA</name>
<evidence type="ECO:0000250" key="1">
    <source>
        <dbReference type="UniProtKB" id="E9PV24"/>
    </source>
</evidence>
<evidence type="ECO:0000250" key="2">
    <source>
        <dbReference type="UniProtKB" id="P02675"/>
    </source>
</evidence>
<evidence type="ECO:0000256" key="3">
    <source>
        <dbReference type="SAM" id="MobiDB-lite"/>
    </source>
</evidence>
<dbReference type="STRING" id="9685.ENSFCAP00000012290"/>
<dbReference type="InParanoid" id="P14469"/>
<dbReference type="Proteomes" id="UP000011712">
    <property type="component" value="Unplaced"/>
</dbReference>
<dbReference type="GO" id="GO:0005576">
    <property type="term" value="C:extracellular region"/>
    <property type="evidence" value="ECO:0007669"/>
    <property type="project" value="UniProtKB-SubCell"/>
</dbReference>
<dbReference type="GO" id="GO:0002250">
    <property type="term" value="P:adaptive immune response"/>
    <property type="evidence" value="ECO:0007669"/>
    <property type="project" value="UniProtKB-KW"/>
</dbReference>
<dbReference type="GO" id="GO:0007596">
    <property type="term" value="P:blood coagulation"/>
    <property type="evidence" value="ECO:0007669"/>
    <property type="project" value="UniProtKB-KW"/>
</dbReference>
<dbReference type="GO" id="GO:0045087">
    <property type="term" value="P:innate immune response"/>
    <property type="evidence" value="ECO:0007669"/>
    <property type="project" value="UniProtKB-KW"/>
</dbReference>
<protein>
    <recommendedName>
        <fullName>Fibrinogen beta chain</fullName>
    </recommendedName>
    <component>
        <recommendedName>
            <fullName>Fibrinopeptide B</fullName>
        </recommendedName>
    </component>
</protein>
<organism>
    <name type="scientific">Felis catus</name>
    <name type="common">Cat</name>
    <name type="synonym">Felis silvestris catus</name>
    <dbReference type="NCBI Taxonomy" id="9685"/>
    <lineage>
        <taxon>Eukaryota</taxon>
        <taxon>Metazoa</taxon>
        <taxon>Chordata</taxon>
        <taxon>Craniata</taxon>
        <taxon>Vertebrata</taxon>
        <taxon>Euteleostomi</taxon>
        <taxon>Mammalia</taxon>
        <taxon>Eutheria</taxon>
        <taxon>Laurasiatheria</taxon>
        <taxon>Carnivora</taxon>
        <taxon>Feliformia</taxon>
        <taxon>Felidae</taxon>
        <taxon>Felinae</taxon>
        <taxon>Felis</taxon>
    </lineage>
</organism>
<proteinExistence type="evidence at protein level"/>
<reference key="1">
    <citation type="journal article" date="1965" name="Acta Chem. Scand.">
        <title>Studies on fibrinopeptides from mammals.</title>
        <authorList>
            <person name="Blombaeck B."/>
            <person name="Blombaeck M."/>
            <person name="Grondahl N.J."/>
        </authorList>
    </citation>
    <scope>PROTEIN SEQUENCE</scope>
</reference>
<accession>P14469</accession>
<feature type="peptide" id="PRO_0000009068" description="Fibrinopeptide B">
    <location>
        <begin position="1"/>
        <end position="20"/>
    </location>
</feature>
<feature type="region of interest" description="Disordered" evidence="3">
    <location>
        <begin position="1"/>
        <end position="20"/>
    </location>
</feature>
<feature type="compositionally biased region" description="Acidic residues" evidence="3">
    <location>
        <begin position="1"/>
        <end position="12"/>
    </location>
</feature>
<feature type="non-terminal residue">
    <location>
        <position position="20"/>
    </location>
</feature>
<comment type="function">
    <text evidence="1">Cleaved by the protease thrombin to yield monomers which, together with fibrinogen alpha (FGA) and fibrinogen gamma (FGG), polymerize to form an insoluble fibrin matrix. Fibrin has a major function in hemostasis as one of the primary components of blood clots. In addition, functions during the early stages of wound repair to stabilize the lesion and guide cell migration during re-epithelialization. Was originally thought to be essential for platelet aggregation, based on in vitro studies using anticoagulated blood. However subsequent studies have shown that it is not absolutely required for thrombus formation in vivo. Enhances expression of SELP in activated platelets. Maternal fibrinogen is essential for successful pregnancy. Fibrin deposition is also associated with infection, where it protects against IFNG-mediated hemorrhage. May also facilitate the antibacterial immune response via both innate and T-cell mediated pathways.</text>
</comment>
<comment type="subunit">
    <text evidence="2">Heterohexamer; disulfide linked. Contains 2 sets of 3 non-identical chains (alpha, beta and gamma). The 2 heterotrimers are in head to head conformation with the N-termini in a small central domain (By similarity).</text>
</comment>
<comment type="subcellular location">
    <subcellularLocation>
        <location>Secreted</location>
    </subcellularLocation>
</comment>
<comment type="domain">
    <text evidence="2">A long coiled coil structure formed by 3 polypeptide chains connects the central nodule to the C-terminal domains (distal nodules). The long C-terminal ends of the alpha chains fold back, contributing a fourth strand to the coiled coil structure.</text>
</comment>
<comment type="PTM">
    <text>Conversion of fibrinogen to fibrin is triggered by thrombin, which cleaves fibrinopeptides A and B from alpha and beta chains, and thus exposes the N-terminal polymerization sites responsible for the formation of the soft clot.</text>
</comment>
<sequence length="20" mass="2328">IIDYYDEGEEDRDVGVVDAR</sequence>
<gene>
    <name type="primary">FGB</name>
</gene>
<keyword id="KW-1064">Adaptive immunity</keyword>
<keyword id="KW-0094">Blood coagulation</keyword>
<keyword id="KW-0175">Coiled coil</keyword>
<keyword id="KW-0903">Direct protein sequencing</keyword>
<keyword id="KW-1015">Disulfide bond</keyword>
<keyword id="KW-0356">Hemostasis</keyword>
<keyword id="KW-0391">Immunity</keyword>
<keyword id="KW-0399">Innate immunity</keyword>
<keyword id="KW-1185">Reference proteome</keyword>
<keyword id="KW-0964">Secreted</keyword>